<name>DAPH_THENN</name>
<accession>B9K867</accession>
<protein>
    <recommendedName>
        <fullName evidence="1">2,3,4,5-tetrahydropyridine-2,6-dicarboxylate N-acetyltransferase</fullName>
        <ecNumber evidence="1">2.3.1.89</ecNumber>
    </recommendedName>
    <alternativeName>
        <fullName evidence="1">Tetrahydrodipicolinate N-acetyltransferase</fullName>
        <shortName evidence="1">THP acetyltransferase</shortName>
        <shortName evidence="1">Tetrahydropicolinate acetylase</shortName>
    </alternativeName>
</protein>
<organism>
    <name type="scientific">Thermotoga neapolitana (strain ATCC 49049 / DSM 4359 / NBRC 107923 / NS-E)</name>
    <dbReference type="NCBI Taxonomy" id="309803"/>
    <lineage>
        <taxon>Bacteria</taxon>
        <taxon>Thermotogati</taxon>
        <taxon>Thermotogota</taxon>
        <taxon>Thermotogae</taxon>
        <taxon>Thermotogales</taxon>
        <taxon>Thermotogaceae</taxon>
        <taxon>Thermotoga</taxon>
    </lineage>
</organism>
<evidence type="ECO:0000255" key="1">
    <source>
        <dbReference type="HAMAP-Rule" id="MF_01691"/>
    </source>
</evidence>
<comment type="function">
    <text evidence="1">Catalyzes the transfer of an acetyl group from acetyl-CoA to tetrahydrodipicolinate.</text>
</comment>
<comment type="catalytic activity">
    <reaction evidence="1">
        <text>(S)-2,3,4,5-tetrahydrodipicolinate + acetyl-CoA + H2O = L-2-acetamido-6-oxoheptanedioate + CoA</text>
        <dbReference type="Rhea" id="RHEA:13085"/>
        <dbReference type="ChEBI" id="CHEBI:15377"/>
        <dbReference type="ChEBI" id="CHEBI:16845"/>
        <dbReference type="ChEBI" id="CHEBI:57287"/>
        <dbReference type="ChEBI" id="CHEBI:57288"/>
        <dbReference type="ChEBI" id="CHEBI:58117"/>
        <dbReference type="EC" id="2.3.1.89"/>
    </reaction>
</comment>
<comment type="pathway">
    <text evidence="1">Amino-acid biosynthesis; L-lysine biosynthesis via DAP pathway; LL-2,6-diaminopimelate from (S)-tetrahydrodipicolinate (acetylase route): step 1/3.</text>
</comment>
<comment type="similarity">
    <text evidence="1">Belongs to the transferase hexapeptide repeat family. DapH subfamily.</text>
</comment>
<gene>
    <name evidence="1" type="primary">dapH</name>
    <name type="ordered locus">CTN_0974</name>
</gene>
<proteinExistence type="inferred from homology"/>
<keyword id="KW-0012">Acyltransferase</keyword>
<keyword id="KW-0028">Amino-acid biosynthesis</keyword>
<keyword id="KW-0220">Diaminopimelate biosynthesis</keyword>
<keyword id="KW-0457">Lysine biosynthesis</keyword>
<keyword id="KW-0677">Repeat</keyword>
<keyword id="KW-0808">Transferase</keyword>
<sequence length="238" mass="25594">MEVNEVDAREIIEMIAKSKKKTPIVAYIKGKLDGIDFSKFKFFGNDQFGVLFGEYEDFRELLEKYGEKIEDYHLEVKARNSALPLADITKYRARIEPGAIIRDMVEIGEGAVIMMGAVINVGAVIGEGTMIDMNAVVGGRAIIGKKCHIGAGAVIAGVIEPPSAKPVVIEDEVVVGANAVILEGVTVGKGSVVAAGAVVTKDVPPYTVVAGVPARVIKQIDEKTKEKTRIVDELRNLE</sequence>
<feature type="chain" id="PRO_0000376730" description="2,3,4,5-tetrahydropyridine-2,6-dicarboxylate N-acetyltransferase">
    <location>
        <begin position="1"/>
        <end position="238"/>
    </location>
</feature>
<reference key="1">
    <citation type="submission" date="2007-11" db="EMBL/GenBank/DDBJ databases">
        <title>The genome sequence of the hyperthermophilic bacterium Thermotoga neapolitana.</title>
        <authorList>
            <person name="Lim S.K."/>
            <person name="Kim J.S."/>
            <person name="Cha S.H."/>
            <person name="Park B.C."/>
            <person name="Lee D.S."/>
            <person name="Tae H.S."/>
            <person name="Kim S.-J."/>
            <person name="Kim J.J."/>
            <person name="Park K.J."/>
            <person name="Lee S.Y."/>
        </authorList>
    </citation>
    <scope>NUCLEOTIDE SEQUENCE [LARGE SCALE GENOMIC DNA]</scope>
    <source>
        <strain>ATCC 49049 / DSM 4359 / NBRC 107923 / NS-E</strain>
    </source>
</reference>
<dbReference type="EC" id="2.3.1.89" evidence="1"/>
<dbReference type="EMBL" id="CP000916">
    <property type="protein sequence ID" value="ACM23150.1"/>
    <property type="molecule type" value="Genomic_DNA"/>
</dbReference>
<dbReference type="SMR" id="B9K867"/>
<dbReference type="STRING" id="309803.CTN_0974"/>
<dbReference type="KEGG" id="tna:CTN_0974"/>
<dbReference type="eggNOG" id="COG2171">
    <property type="taxonomic scope" value="Bacteria"/>
</dbReference>
<dbReference type="HOGENOM" id="CLU_103751_0_0_0"/>
<dbReference type="UniPathway" id="UPA00034">
    <property type="reaction ID" value="UER00022"/>
</dbReference>
<dbReference type="Proteomes" id="UP000000445">
    <property type="component" value="Chromosome"/>
</dbReference>
<dbReference type="GO" id="GO:0047200">
    <property type="term" value="F:tetrahydrodipicolinate N-acetyltransferase activity"/>
    <property type="evidence" value="ECO:0007669"/>
    <property type="project" value="UniProtKB-EC"/>
</dbReference>
<dbReference type="GO" id="GO:0019877">
    <property type="term" value="P:diaminopimelate biosynthetic process"/>
    <property type="evidence" value="ECO:0007669"/>
    <property type="project" value="UniProtKB-UniRule"/>
</dbReference>
<dbReference type="GO" id="GO:0009089">
    <property type="term" value="P:lysine biosynthetic process via diaminopimelate"/>
    <property type="evidence" value="ECO:0007669"/>
    <property type="project" value="UniProtKB-UniRule"/>
</dbReference>
<dbReference type="CDD" id="cd03350">
    <property type="entry name" value="LbH_THP_succinylT"/>
    <property type="match status" value="1"/>
</dbReference>
<dbReference type="Gene3D" id="2.160.10.10">
    <property type="entry name" value="Hexapeptide repeat proteins"/>
    <property type="match status" value="1"/>
</dbReference>
<dbReference type="Gene3D" id="3.30.70.250">
    <property type="entry name" value="Malonyl-CoA ACP transacylase, ACP-binding"/>
    <property type="match status" value="1"/>
</dbReference>
<dbReference type="HAMAP" id="MF_01691">
    <property type="entry name" value="DapH"/>
    <property type="match status" value="1"/>
</dbReference>
<dbReference type="InterPro" id="IPR019873">
    <property type="entry name" value="DapH"/>
</dbReference>
<dbReference type="InterPro" id="IPR013710">
    <property type="entry name" value="DapH_N"/>
</dbReference>
<dbReference type="InterPro" id="IPR001451">
    <property type="entry name" value="Hexapep"/>
</dbReference>
<dbReference type="InterPro" id="IPR018357">
    <property type="entry name" value="Hexapep_transf_CS"/>
</dbReference>
<dbReference type="InterPro" id="IPR050179">
    <property type="entry name" value="Trans_hexapeptide_repeat"/>
</dbReference>
<dbReference type="InterPro" id="IPR011004">
    <property type="entry name" value="Trimer_LpxA-like_sf"/>
</dbReference>
<dbReference type="NCBIfam" id="TIGR03532">
    <property type="entry name" value="DapD_Ac"/>
    <property type="match status" value="1"/>
</dbReference>
<dbReference type="PANTHER" id="PTHR43300:SF10">
    <property type="entry name" value="2,3,4,5-TETRAHYDROPYRIDINE-2,6-DICARBOXYLATE N-ACETYLTRANSFERASE"/>
    <property type="match status" value="1"/>
</dbReference>
<dbReference type="PANTHER" id="PTHR43300">
    <property type="entry name" value="ACETYLTRANSFERASE"/>
    <property type="match status" value="1"/>
</dbReference>
<dbReference type="Pfam" id="PF08503">
    <property type="entry name" value="DapH_N"/>
    <property type="match status" value="1"/>
</dbReference>
<dbReference type="Pfam" id="PF00132">
    <property type="entry name" value="Hexapep"/>
    <property type="match status" value="1"/>
</dbReference>
<dbReference type="Pfam" id="PF14602">
    <property type="entry name" value="Hexapep_2"/>
    <property type="match status" value="1"/>
</dbReference>
<dbReference type="SUPFAM" id="SSF51161">
    <property type="entry name" value="Trimeric LpxA-like enzymes"/>
    <property type="match status" value="1"/>
</dbReference>
<dbReference type="PROSITE" id="PS00101">
    <property type="entry name" value="HEXAPEP_TRANSFERASES"/>
    <property type="match status" value="1"/>
</dbReference>